<feature type="chain" id="PRO_0000142741" description="RNA-directed RNA polymerase L">
    <location>
        <begin position="1"/>
        <end position="2269"/>
    </location>
</feature>
<feature type="domain" description="RdRp catalytic" evidence="5">
    <location>
        <begin position="666"/>
        <end position="850"/>
    </location>
</feature>
<feature type="domain" description="Mononegavirus-type SAM-dependent 2'-O-MTase" evidence="6">
    <location>
        <begin position="1785"/>
        <end position="1998"/>
    </location>
</feature>
<feature type="binding site" evidence="4">
    <location>
        <begin position="1815"/>
        <end position="1824"/>
    </location>
    <ligand>
        <name>ATP</name>
        <dbReference type="ChEBI" id="CHEBI:30616"/>
    </ligand>
</feature>
<evidence type="ECO:0000250" key="1"/>
<evidence type="ECO:0000250" key="2">
    <source>
        <dbReference type="UniProtKB" id="P03523"/>
    </source>
</evidence>
<evidence type="ECO:0000250" key="3">
    <source>
        <dbReference type="UniProtKB" id="P28887"/>
    </source>
</evidence>
<evidence type="ECO:0000255" key="4"/>
<evidence type="ECO:0000255" key="5">
    <source>
        <dbReference type="PROSITE-ProRule" id="PRU00539"/>
    </source>
</evidence>
<evidence type="ECO:0000255" key="6">
    <source>
        <dbReference type="PROSITE-ProRule" id="PRU00923"/>
    </source>
</evidence>
<evidence type="ECO:0000305" key="7"/>
<accession>P35341</accession>
<comment type="function">
    <text evidence="2">RNA-directed RNA polymerase that catalyzes the transcription of viral mRNAs, their capping and polyadenylation. The template is composed of the viral RNA tightly encapsidated by the nucleoprotein (N). The viral polymerase binds to the genomic RNA at the 3' leader promoter, and transcribes subsequently all viral mRNAs with a decreasing efficiency. The first gene is the most transcribed, and the last the least transcribed. The viral phosphoprotein acts as a processivity factor. Capping is concomitant with initiation of mRNA transcription. Indeed, a GDP polyribonucleotidyl transferase (PRNTase) adds the cap structure when the nascent RNA chain length has reached few nucleotides. Ribose 2'-O methylation of viral mRNA cap precedes and facilitates subsequent guanine-N-7 methylation, both activities being carried by the viral polymerase. Polyadenylation of mRNAs occur by a stuttering mechanism at a slipery stop site present at the end viral genes. After finishing transcription of a mRNA, the polymerase can resume transcription of the downstream gene.</text>
</comment>
<comment type="function">
    <text evidence="2">RNA-directed RNA polymerase that catalyzes the replication of viral genomic RNA. The template is composed of the viral RNA tightly encapsidated by the nucleoprotein (N). The replicase mode is dependent on intracellular N protein concentration. In this mode, the polymerase replicates the whole viral genome without recognizing transcriptional signals, and the replicated genome is not caped or polyadenylated.</text>
</comment>
<comment type="catalytic activity">
    <reaction evidence="5">
        <text>RNA(n) + a ribonucleoside 5'-triphosphate = RNA(n+1) + diphosphate</text>
        <dbReference type="Rhea" id="RHEA:21248"/>
        <dbReference type="Rhea" id="RHEA-COMP:14527"/>
        <dbReference type="Rhea" id="RHEA-COMP:17342"/>
        <dbReference type="ChEBI" id="CHEBI:33019"/>
        <dbReference type="ChEBI" id="CHEBI:61557"/>
        <dbReference type="ChEBI" id="CHEBI:140395"/>
        <dbReference type="EC" id="2.7.7.48"/>
    </reaction>
</comment>
<comment type="catalytic activity">
    <reaction evidence="2">
        <text>a 5'-end (5'-triphosphoguanosine)-adenylyl-adenylyl-cytidylyl-adenosine in mRNA + 2 S-adenosyl-L-methionine = a 5'-end (N(7)-methyl 5'-triphosphoguanosine)-(2'-O-methyladenylyl)-adenylyl-cytidylyl-adenosine in mRNA + 2 S-adenosyl-L-homocysteine + H(+)</text>
        <dbReference type="Rhea" id="RHEA:65376"/>
        <dbReference type="Rhea" id="RHEA-COMP:16797"/>
        <dbReference type="Rhea" id="RHEA-COMP:16798"/>
        <dbReference type="ChEBI" id="CHEBI:15378"/>
        <dbReference type="ChEBI" id="CHEBI:57856"/>
        <dbReference type="ChEBI" id="CHEBI:59789"/>
        <dbReference type="ChEBI" id="CHEBI:156483"/>
        <dbReference type="ChEBI" id="CHEBI:156484"/>
        <dbReference type="EC" id="2.1.1.375"/>
    </reaction>
</comment>
<comment type="catalytic activity">
    <reaction evidence="2">
        <text>a 5'-end (5'-triphosphoguanosine)-adenylyl-adenylyl-cytidylyl-adenosine in mRNA + S-adenosyl-L-methionine = a 5'-end (5'-triphosphoguanosine)-(2'-O-methyladenylyl)-adenylyl-cytidylyl-adenosine in mRNA + S-adenosyl-L-homocysteine + H(+)</text>
        <dbReference type="Rhea" id="RHEA:65380"/>
        <dbReference type="Rhea" id="RHEA-COMP:16797"/>
        <dbReference type="Rhea" id="RHEA-COMP:16801"/>
        <dbReference type="ChEBI" id="CHEBI:15378"/>
        <dbReference type="ChEBI" id="CHEBI:57856"/>
        <dbReference type="ChEBI" id="CHEBI:59789"/>
        <dbReference type="ChEBI" id="CHEBI:156482"/>
        <dbReference type="ChEBI" id="CHEBI:156484"/>
    </reaction>
</comment>
<comment type="catalytic activity">
    <reaction evidence="3">
        <text>a 5'-end triphospho-adenylyl-adenylyl-cytidylyl-adenosine in mRNA + GDP + H(+) = a 5'-end (5'-triphosphoguanosine)-adenylyl-adenylyl-cytidylyl-adenosine in mRNA + diphosphate</text>
        <dbReference type="Rhea" id="RHEA:65436"/>
        <dbReference type="Rhea" id="RHEA-COMP:16797"/>
        <dbReference type="Rhea" id="RHEA-COMP:16799"/>
        <dbReference type="ChEBI" id="CHEBI:15378"/>
        <dbReference type="ChEBI" id="CHEBI:33019"/>
        <dbReference type="ChEBI" id="CHEBI:58189"/>
        <dbReference type="ChEBI" id="CHEBI:156484"/>
        <dbReference type="ChEBI" id="CHEBI:156503"/>
        <dbReference type="EC" id="2.7.7.88"/>
    </reaction>
</comment>
<comment type="catalytic activity">
    <reaction evidence="2">
        <text>a 5'-end (5'-triphosphoguanosine)-(2'-O-methyladenylyl)-adenylyl-cytidylyl-adenosine in mRNA + S-adenosyl-L-methionine = a 5'-end (N(7)-methyl 5'-triphosphoguanosine)-(2'-O-methyladenylyl)-adenylyl-cytidylyl-adenosine in mRNA + S-adenosyl-L-homocysteine</text>
        <dbReference type="Rhea" id="RHEA:65440"/>
        <dbReference type="Rhea" id="RHEA-COMP:16798"/>
        <dbReference type="Rhea" id="RHEA-COMP:16801"/>
        <dbReference type="ChEBI" id="CHEBI:57856"/>
        <dbReference type="ChEBI" id="CHEBI:59789"/>
        <dbReference type="ChEBI" id="CHEBI:156482"/>
        <dbReference type="ChEBI" id="CHEBI:156483"/>
    </reaction>
</comment>
<comment type="catalytic activity">
    <reaction evidence="3">
        <text>GTP + H2O = GDP + phosphate + H(+)</text>
        <dbReference type="Rhea" id="RHEA:19669"/>
        <dbReference type="ChEBI" id="CHEBI:15377"/>
        <dbReference type="ChEBI" id="CHEBI:15378"/>
        <dbReference type="ChEBI" id="CHEBI:37565"/>
        <dbReference type="ChEBI" id="CHEBI:43474"/>
        <dbReference type="ChEBI" id="CHEBI:58189"/>
    </reaction>
</comment>
<comment type="subunit">
    <text evidence="1">Interacts with the P protein.</text>
</comment>
<comment type="subcellular location">
    <subcellularLocation>
        <location evidence="7">Virion</location>
    </subcellularLocation>
    <subcellularLocation>
        <location evidence="1">Host cytoplasm</location>
    </subcellularLocation>
</comment>
<comment type="similarity">
    <text evidence="7">Belongs to the paramyxovirus L protein family.</text>
</comment>
<organism>
    <name type="scientific">Simian virus 41</name>
    <name type="common">SV41</name>
    <dbReference type="NCBI Taxonomy" id="3052561"/>
    <lineage>
        <taxon>Viruses</taxon>
        <taxon>Riboviria</taxon>
        <taxon>Orthornavirae</taxon>
        <taxon>Negarnaviricota</taxon>
        <taxon>Haploviricotina</taxon>
        <taxon>Monjiviricetes</taxon>
        <taxon>Mononegavirales</taxon>
        <taxon>Paramyxoviridae</taxon>
        <taxon>Rubulavirinae</taxon>
        <taxon>Orthorubulavirus</taxon>
    </lineage>
</organism>
<name>L_SV41</name>
<keyword id="KW-0067">ATP-binding</keyword>
<keyword id="KW-1035">Host cytoplasm</keyword>
<keyword id="KW-0378">Hydrolase</keyword>
<keyword id="KW-0489">Methyltransferase</keyword>
<keyword id="KW-0506">mRNA capping</keyword>
<keyword id="KW-0507">mRNA processing</keyword>
<keyword id="KW-0511">Multifunctional enzyme</keyword>
<keyword id="KW-0547">Nucleotide-binding</keyword>
<keyword id="KW-0548">Nucleotidyltransferase</keyword>
<keyword id="KW-1185">Reference proteome</keyword>
<keyword id="KW-0696">RNA-directed RNA polymerase</keyword>
<keyword id="KW-0949">S-adenosyl-L-methionine</keyword>
<keyword id="KW-0808">Transferase</keyword>
<keyword id="KW-0693">Viral RNA replication</keyword>
<keyword id="KW-0946">Virion</keyword>
<proteinExistence type="inferred from homology"/>
<sequence length="2269" mass="256432">MAASADILLPEVHLNSPIVKHKLVYFLLLGKLPHNLSEDEITPLHNQNWDQIAHEESNLSERLFAVRSELTRRIAQLRATRWRSEIAVLLWPNSLPYLCTFKPYNRLNTIDEWNKLVSAASNILSSPLSKCMQDISTKLIGRTNLFSRSQSRPGQSADNTITLNKIAAVWADNKWQPLVSLWLTIKYQMRQMIANQSKRTCSELVYVVDTRSGIIIITPELVTCFDKDHSVLMYFTFEMVLMISDLFEGRMNVTALCTVSNYLSPLLSRIERLFDIVDHLAHLLGDNVYKIIASLESLVYGCLQLHDPVIDLAGTFYSFVAQEIVDGLQQGNILSPEEAYTVTEQLLECFSGLSPDLTAELLCLMRLWGHPNLTAAQAAKKVRDTMCAGKVLDFQIIMKTLAFFHTILINGYRRKKNGIWPPLSLPGNASKSLIELHHDNSEISYEYTLRHWKELSLIEFKKCFDFDPGEELSIFMKDKAISAPKEDWMSVFRKSLIKQRHQRHHIPMPNPFNRRLLLNFIEDPSFDPAKELEYVTSGEYLRDPHFCASYSLKEKEIKPDGRIFAKLTNRMRSCQVIAEALLANHAGKLMKENGVVMNQISLTKSLLTMSQIGLISEKAQRYTRDNIALGALFSKGQRTRAHPQTQLSSIDSSQNRELPDDSLELSACFITTDLTKYCPQWRYQTIIPFAKTLNRMYGVPHLFEWIHLRLLRSTLYVGDPFNPPADTSVFDLDQVLNGDIFIVSPKGGIEGLCQKMWTMISISVIILSSAESKTRVMSMVQGDNQAIAVTTKVPRSVPLTEKRNLAYNASKLFFDRLKHNNFGLGHQLKAQETIISSQFFIYSKRVFYQGRILTQALKNASKLCLTADVLGECTQASCSNAATTIMRLTENGVEKDVCYMLNVYQAIRQLCFDLYYPQYSIPGEQISQHYLKHPSIVARLVILPSQLGGLNYLSCSRLFNRNIGDPLGTAVADLKRLIKCGALESWVLSNLLSRKPGTGSWATLAADPYSLNIDYLYPPTTILKRHTQNTLMEVCKNPMLKGVFTDNAREEENNLAKFLLDRDIVLPRVAHIVIEQSSVGRKKQIQGFFDTTRTIMRKSFEIKPLSSKRTLSVIECNINYLAYNFNIIHHPNPIPGYLQCITTDNCSVDIARSLRKLSWSSLLNGRTLEGLETPDPIEVVNGALVIGVGECDYCMQGDTKFTWFFLPKGIEIDGDPEKNPPIRVPYVGSKTEERRVASMAYVKGATSSLKAALRGAGVFIWAYGDTDANWDDALDLANTRVQISKEQLQALTPLPTSANITHRLDDGATTIKFTPASSYAFSSYTHISNDQQYLEVDNRVVDSNIIYQQLMITGLGIIETYNNPPIRTSSEELTLHLHTSSSCCIRPVDGCIICESPSLLPQLTVPYTNPFVYDPNPLADYEIAHLDYLSYQARIGSIEHYSLQDRIDLLAHLTAKQMINSIIGLDESVSLLNDAVVTSDYTNNWISECSYTKIDLVFKMMAWNLLLELSFQMYYLRITTWSNIFDYTYMTLRRIPGNALTNIAATISHPKLLRRAMNLDVITPVHAPYLASLDYIKLSIDAIQWGIKQVLADLHNGIDYEILILSEDSLELSDRAMNLIARKLTLLALIQGNQLVLPKIKGLSPDEKCLVLTEHLMSEYQLLLLDDAELSKRSYNLTNPRITAFPSNNFYLTRKVLNSIRDSEEGQYLIGAYYDSFQQMETDIILHSTLIAPYDTSETLTKFDLCISLFPHDDNLEKYPLPVDHDSQSAVSTIVPGPPIHHVLRPLGVSSTSWYKGLSYVRYLELCKVPTGDHLYLAEGSGASMSLVEMLIPGQKVYYNSLFSSGENPPQRNYAPLPTQFVQSVPYKLWQADLTNKEGIIEDFIPLWNGNGAVTDLSNKDCVAFIIHKVGAEQASLVHVDLESTANLNQQSLSRSQIHALIIATTVLKRGGFLVYKTSWLPFSRLSQLACVLWSFFDKITMIRSSYSDPNSHEIYLVCRLAADFKTIGFSAALASAIAIAIHGDGFTTIHPDVVSNYWQHHLENVGRVGKAIDDVIDGVSTNFYSGDNGLILRCGGTPSSRKWLDIDLLPTFSSLQETLVNLVTVHLKEIIEIQTSSMEDYTSLLFTPYNIGSVGKIRTIVKLILERSLMYVIRNWLVMPSSYQDSVRQDLELGSFRLSSVLQEDTFWKLTENRKYLASQLTRDYITTFFTTHSILPIHRSYQKRIWKALGSVIYCSEVPGESQQNWDSIPLVYEEDQIERGIDGEEL</sequence>
<gene>
    <name type="primary">L</name>
</gene>
<dbReference type="EC" id="2.7.7.48" evidence="3"/>
<dbReference type="EC" id="3.6.1.-" evidence="2"/>
<dbReference type="EC" id="2.7.7.88" evidence="2"/>
<dbReference type="EC" id="2.1.1.375" evidence="2"/>
<dbReference type="EMBL" id="X64275">
    <property type="protein sequence ID" value="CAA45569.1"/>
    <property type="molecule type" value="Genomic_RNA"/>
</dbReference>
<dbReference type="PIR" id="JQ1750">
    <property type="entry name" value="JQ1750"/>
</dbReference>
<dbReference type="SMR" id="P35341"/>
<dbReference type="KEGG" id="vg:3159460"/>
<dbReference type="Proteomes" id="UP000108270">
    <property type="component" value="Segment"/>
</dbReference>
<dbReference type="GO" id="GO:0030430">
    <property type="term" value="C:host cell cytoplasm"/>
    <property type="evidence" value="ECO:0007669"/>
    <property type="project" value="UniProtKB-SubCell"/>
</dbReference>
<dbReference type="GO" id="GO:0044423">
    <property type="term" value="C:virion component"/>
    <property type="evidence" value="ECO:0007669"/>
    <property type="project" value="UniProtKB-KW"/>
</dbReference>
<dbReference type="GO" id="GO:0005524">
    <property type="term" value="F:ATP binding"/>
    <property type="evidence" value="ECO:0007669"/>
    <property type="project" value="UniProtKB-KW"/>
</dbReference>
<dbReference type="GO" id="GO:0003924">
    <property type="term" value="F:GTPase activity"/>
    <property type="evidence" value="ECO:0007669"/>
    <property type="project" value="RHEA"/>
</dbReference>
<dbReference type="GO" id="GO:0004482">
    <property type="term" value="F:mRNA 5'-cap (guanine-N7-)-methyltransferase activity"/>
    <property type="evidence" value="ECO:0007669"/>
    <property type="project" value="InterPro"/>
</dbReference>
<dbReference type="GO" id="GO:0003968">
    <property type="term" value="F:RNA-directed RNA polymerase activity"/>
    <property type="evidence" value="ECO:0007669"/>
    <property type="project" value="UniProtKB-KW"/>
</dbReference>
<dbReference type="Gene3D" id="3.40.50.150">
    <property type="entry name" value="Vaccinia Virus protein VP39"/>
    <property type="match status" value="1"/>
</dbReference>
<dbReference type="InterPro" id="IPR039736">
    <property type="entry name" value="L_poly_C"/>
</dbReference>
<dbReference type="InterPro" id="IPR026890">
    <property type="entry name" value="Mononeg_mRNAcap"/>
</dbReference>
<dbReference type="InterPro" id="IPR014023">
    <property type="entry name" value="Mononeg_RNA_pol_cat"/>
</dbReference>
<dbReference type="InterPro" id="IPR025786">
    <property type="entry name" value="Mononega_L_MeTrfase"/>
</dbReference>
<dbReference type="InterPro" id="IPR016269">
    <property type="entry name" value="RNA-dir_pol_paramyxovirus"/>
</dbReference>
<dbReference type="InterPro" id="IPR029063">
    <property type="entry name" value="SAM-dependent_MTases_sf"/>
</dbReference>
<dbReference type="NCBIfam" id="TIGR04198">
    <property type="entry name" value="paramyx_RNAcap"/>
    <property type="match status" value="1"/>
</dbReference>
<dbReference type="Pfam" id="PF14318">
    <property type="entry name" value="Mononeg_mRNAcap"/>
    <property type="match status" value="1"/>
</dbReference>
<dbReference type="Pfam" id="PF00946">
    <property type="entry name" value="Mononeg_RNA_pol"/>
    <property type="match status" value="1"/>
</dbReference>
<dbReference type="PIRSF" id="PIRSF000830">
    <property type="entry name" value="RNA_pol_ParamyxoV"/>
    <property type="match status" value="1"/>
</dbReference>
<dbReference type="PROSITE" id="PS50526">
    <property type="entry name" value="RDRP_SSRNA_NEG_NONSEG"/>
    <property type="match status" value="1"/>
</dbReference>
<dbReference type="PROSITE" id="PS51590">
    <property type="entry name" value="SAM_MT_MNV_L"/>
    <property type="match status" value="1"/>
</dbReference>
<reference key="1">
    <citation type="journal article" date="1992" name="J. Gen. Virol.">
        <title>Nucleotide sequence analysis of the simian virus 41 gene encoding the large (L) protein and construction of a phylogenetic tree for the L proteins of paramyxoviruses.</title>
        <authorList>
            <person name="Ogawa M."/>
            <person name="Mutsuga N."/>
            <person name="Tsurudome M."/>
            <person name="Kawano M."/>
            <person name="Matsumura H."/>
            <person name="Kusagawa S."/>
            <person name="Komada H."/>
            <person name="Nishio M."/>
            <person name="Ito Y."/>
        </authorList>
    </citation>
    <scope>NUCLEOTIDE SEQUENCE [GENOMIC RNA]</scope>
    <source>
        <strain>Toshiba/Chanock</strain>
    </source>
</reference>
<organismHost>
    <name type="scientific">Simiiformes</name>
    <dbReference type="NCBI Taxonomy" id="314293"/>
</organismHost>
<protein>
    <recommendedName>
        <fullName>RNA-directed RNA polymerase L</fullName>
        <shortName>Protein L</shortName>
    </recommendedName>
    <alternativeName>
        <fullName>Large structural protein</fullName>
    </alternativeName>
    <alternativeName>
        <fullName>Replicase</fullName>
    </alternativeName>
    <alternativeName>
        <fullName>Transcriptase</fullName>
    </alternativeName>
    <domain>
        <recommendedName>
            <fullName>RNA-directed RNA polymerase</fullName>
            <ecNumber evidence="3">2.7.7.48</ecNumber>
        </recommendedName>
    </domain>
    <domain>
        <recommendedName>
            <fullName evidence="2">GTP phosphohydrolase</fullName>
            <ecNumber evidence="2">3.6.1.-</ecNumber>
        </recommendedName>
    </domain>
    <domain>
        <recommendedName>
            <fullName evidence="7">GDP polyribonucleotidyltransferase</fullName>
            <ecNumber evidence="2">2.7.7.88</ecNumber>
        </recommendedName>
        <alternativeName>
            <fullName evidence="7">PRNTase</fullName>
        </alternativeName>
    </domain>
    <domain>
        <recommendedName>
            <fullName evidence="7">mRNA cap methyltransferase</fullName>
            <ecNumber evidence="2">2.1.1.375</ecNumber>
        </recommendedName>
        <alternativeName>
            <fullName evidence="2">mRNA (guanine-N(7)-)-methyltransferase</fullName>
            <shortName evidence="2">G-N7-MTase</shortName>
        </alternativeName>
        <alternativeName>
            <fullName evidence="2">mRNA (nucleoside-2'-O-)-methyltransferase</fullName>
            <shortName evidence="2">N1-2'-O-MTase</shortName>
        </alternativeName>
    </domain>
</protein>